<comment type="function">
    <text>Antifreeze proteins lower the blood freezing point.</text>
</comment>
<comment type="similarity">
    <text evidence="1">Belongs to the type-I AFP family.</text>
</comment>
<accession>P20421</accession>
<proteinExistence type="evidence at protein level"/>
<organism>
    <name type="scientific">Myoxocephalus aenaeus</name>
    <name type="common">Grubby sculpin</name>
    <name type="synonym">Cottus aenaeus</name>
    <dbReference type="NCBI Taxonomy" id="8096"/>
    <lineage>
        <taxon>Eukaryota</taxon>
        <taxon>Metazoa</taxon>
        <taxon>Chordata</taxon>
        <taxon>Craniata</taxon>
        <taxon>Vertebrata</taxon>
        <taxon>Euteleostomi</taxon>
        <taxon>Actinopterygii</taxon>
        <taxon>Neopterygii</taxon>
        <taxon>Teleostei</taxon>
        <taxon>Neoteleostei</taxon>
        <taxon>Acanthomorphata</taxon>
        <taxon>Eupercaria</taxon>
        <taxon>Perciformes</taxon>
        <taxon>Cottioidei</taxon>
        <taxon>Cottales</taxon>
        <taxon>Cottidae</taxon>
        <taxon>Myoxocephalus</taxon>
    </lineage>
</organism>
<protein>
    <recommendedName>
        <fullName>Ice-structuring protein GS-5</fullName>
        <shortName>ISP GS-5</shortName>
    </recommendedName>
    <alternativeName>
        <fullName>Antifreeze peptide GS-5</fullName>
    </alternativeName>
</protein>
<reference key="1">
    <citation type="journal article" date="1988" name="Can. J. Zool.">
        <title>Primary structures of the alanine-rich antifreeze polypeptides from grubby sculpin, Myoxocephalus aenaeus.</title>
        <authorList>
            <person name="Chakrabartty A."/>
            <person name="Hew C.-L."/>
            <person name="Shears M."/>
            <person name="Fletcher G."/>
        </authorList>
    </citation>
    <scope>PROTEIN SEQUENCE</scope>
</reference>
<evidence type="ECO:0000305" key="1"/>
<name>ANP5_MYOAE</name>
<dbReference type="PIR" id="S06417">
    <property type="entry name" value="FDFI5G"/>
</dbReference>
<dbReference type="SMR" id="P20421"/>
<feature type="chain" id="PRO_0000155146" description="Ice-structuring protein GS-5">
    <location>
        <begin position="1"/>
        <end position="33"/>
    </location>
</feature>
<feature type="modified residue" description="Blocked amino end (Met)">
    <location>
        <position position="1"/>
    </location>
</feature>
<keyword id="KW-0047">Antifreeze protein</keyword>
<keyword id="KW-0903">Direct protein sequencing</keyword>
<keyword id="KW-0677">Repeat</keyword>
<sequence length="33" mass="2980">MDAPAIAAAKTAADALAAAKKTAADAAAAAAKP</sequence>